<accession>O47872</accession>
<proteinExistence type="inferred from homology"/>
<name>ATP6_ALLMI</name>
<evidence type="ECO:0000250" key="1">
    <source>
        <dbReference type="UniProtKB" id="P00846"/>
    </source>
</evidence>
<evidence type="ECO:0000255" key="2"/>
<evidence type="ECO:0000305" key="3"/>
<gene>
    <name evidence="1" type="primary">MT-ATP6</name>
    <name type="synonym">ATP6</name>
    <name type="synonym">ATPASE6</name>
    <name type="synonym">MTATP6</name>
</gene>
<feature type="chain" id="PRO_0000082083" description="ATP synthase F(0) complex subunit a">
    <location>
        <begin position="1"/>
        <end position="225"/>
    </location>
</feature>
<feature type="transmembrane region" description="Helical" evidence="2">
    <location>
        <begin position="10"/>
        <end position="30"/>
    </location>
</feature>
<feature type="transmembrane region" description="Helical" evidence="2">
    <location>
        <begin position="69"/>
        <end position="89"/>
    </location>
</feature>
<feature type="transmembrane region" description="Helical" evidence="2">
    <location>
        <begin position="96"/>
        <end position="116"/>
    </location>
</feature>
<feature type="transmembrane region" description="Helical" evidence="2">
    <location>
        <begin position="135"/>
        <end position="155"/>
    </location>
</feature>
<feature type="transmembrane region" description="Helical" evidence="2">
    <location>
        <begin position="168"/>
        <end position="188"/>
    </location>
</feature>
<feature type="transmembrane region" description="Helical" evidence="2">
    <location>
        <begin position="194"/>
        <end position="214"/>
    </location>
</feature>
<reference key="1">
    <citation type="journal article" date="1997" name="Mol. Biol. Evol.">
        <title>The complete mitochondrial genome of Alligator mississippiensis and the separation between recent archosauria (birds and crocodiles).</title>
        <authorList>
            <person name="Janke A."/>
            <person name="Arnason U."/>
        </authorList>
    </citation>
    <scope>NUCLEOTIDE SEQUENCE [GENOMIC DNA]</scope>
    <source>
        <tissue>Liver</tissue>
    </source>
</reference>
<reference key="2">
    <citation type="submission" date="1998-06" db="EMBL/GenBank/DDBJ databases">
        <title>Primers for a PCR-based approach to complete mitochondrial genome sequencing.</title>
        <authorList>
            <person name="Sorenson M.D."/>
            <person name="Dimcheff D.E."/>
            <person name="Ast J.C."/>
            <person name="Yuri T."/>
            <person name="Mindell D.P."/>
        </authorList>
    </citation>
    <scope>NUCLEOTIDE SEQUENCE [GENOMIC DNA]</scope>
</reference>
<organism>
    <name type="scientific">Alligator mississippiensis</name>
    <name type="common">American alligator</name>
    <dbReference type="NCBI Taxonomy" id="8496"/>
    <lineage>
        <taxon>Eukaryota</taxon>
        <taxon>Metazoa</taxon>
        <taxon>Chordata</taxon>
        <taxon>Craniata</taxon>
        <taxon>Vertebrata</taxon>
        <taxon>Euteleostomi</taxon>
        <taxon>Archelosauria</taxon>
        <taxon>Archosauria</taxon>
        <taxon>Crocodylia</taxon>
        <taxon>Alligatoridae</taxon>
        <taxon>Alligatorinae</taxon>
        <taxon>Alligator</taxon>
    </lineage>
</organism>
<keyword id="KW-0066">ATP synthesis</keyword>
<keyword id="KW-0138">CF(0)</keyword>
<keyword id="KW-0375">Hydrogen ion transport</keyword>
<keyword id="KW-0406">Ion transport</keyword>
<keyword id="KW-0472">Membrane</keyword>
<keyword id="KW-0496">Mitochondrion</keyword>
<keyword id="KW-0999">Mitochondrion inner membrane</keyword>
<keyword id="KW-0812">Transmembrane</keyword>
<keyword id="KW-1133">Transmembrane helix</keyword>
<keyword id="KW-0813">Transport</keyword>
<dbReference type="EMBL" id="Y13113">
    <property type="protein sequence ID" value="CAA73566.1"/>
    <property type="molecule type" value="Genomic_DNA"/>
</dbReference>
<dbReference type="EMBL" id="AF069428">
    <property type="protein sequence ID" value="AAD09985.1"/>
    <property type="molecule type" value="Genomic_DNA"/>
</dbReference>
<dbReference type="PIR" id="T11279">
    <property type="entry name" value="T11279"/>
</dbReference>
<dbReference type="RefSeq" id="NP_007567.1">
    <property type="nucleotide sequence ID" value="NC_001922.1"/>
</dbReference>
<dbReference type="SMR" id="O47872"/>
<dbReference type="GeneID" id="808244"/>
<dbReference type="KEGG" id="amj:808244"/>
<dbReference type="CTD" id="4508"/>
<dbReference type="OrthoDB" id="5976622at2759"/>
<dbReference type="GO" id="GO:0005743">
    <property type="term" value="C:mitochondrial inner membrane"/>
    <property type="evidence" value="ECO:0007669"/>
    <property type="project" value="UniProtKB-SubCell"/>
</dbReference>
<dbReference type="GO" id="GO:0045259">
    <property type="term" value="C:proton-transporting ATP synthase complex"/>
    <property type="evidence" value="ECO:0000250"/>
    <property type="project" value="UniProtKB"/>
</dbReference>
<dbReference type="GO" id="GO:0015252">
    <property type="term" value="F:proton channel activity"/>
    <property type="evidence" value="ECO:0000250"/>
    <property type="project" value="UniProtKB"/>
</dbReference>
<dbReference type="GO" id="GO:0046933">
    <property type="term" value="F:proton-transporting ATP synthase activity, rotational mechanism"/>
    <property type="evidence" value="ECO:0007669"/>
    <property type="project" value="TreeGrafter"/>
</dbReference>
<dbReference type="GO" id="GO:0015986">
    <property type="term" value="P:proton motive force-driven ATP synthesis"/>
    <property type="evidence" value="ECO:0000250"/>
    <property type="project" value="UniProtKB"/>
</dbReference>
<dbReference type="GO" id="GO:1902600">
    <property type="term" value="P:proton transmembrane transport"/>
    <property type="evidence" value="ECO:0000250"/>
    <property type="project" value="UniProtKB"/>
</dbReference>
<dbReference type="CDD" id="cd00310">
    <property type="entry name" value="ATP-synt_Fo_a_6"/>
    <property type="match status" value="1"/>
</dbReference>
<dbReference type="Gene3D" id="1.20.120.220">
    <property type="entry name" value="ATP synthase, F0 complex, subunit A"/>
    <property type="match status" value="1"/>
</dbReference>
<dbReference type="InterPro" id="IPR000568">
    <property type="entry name" value="ATP_synth_F0_asu"/>
</dbReference>
<dbReference type="InterPro" id="IPR023011">
    <property type="entry name" value="ATP_synth_F0_asu_AS"/>
</dbReference>
<dbReference type="InterPro" id="IPR045083">
    <property type="entry name" value="ATP_synth_F0_asu_bact/mt"/>
</dbReference>
<dbReference type="InterPro" id="IPR035908">
    <property type="entry name" value="F0_ATP_A_sf"/>
</dbReference>
<dbReference type="NCBIfam" id="TIGR01131">
    <property type="entry name" value="ATP_synt_6_or_A"/>
    <property type="match status" value="1"/>
</dbReference>
<dbReference type="PANTHER" id="PTHR11410">
    <property type="entry name" value="ATP SYNTHASE SUBUNIT A"/>
    <property type="match status" value="1"/>
</dbReference>
<dbReference type="PANTHER" id="PTHR11410:SF0">
    <property type="entry name" value="ATP SYNTHASE SUBUNIT A"/>
    <property type="match status" value="1"/>
</dbReference>
<dbReference type="Pfam" id="PF00119">
    <property type="entry name" value="ATP-synt_A"/>
    <property type="match status" value="1"/>
</dbReference>
<dbReference type="PRINTS" id="PR00123">
    <property type="entry name" value="ATPASEA"/>
</dbReference>
<dbReference type="SUPFAM" id="SSF81336">
    <property type="entry name" value="F1F0 ATP synthase subunit A"/>
    <property type="match status" value="1"/>
</dbReference>
<dbReference type="PROSITE" id="PS00449">
    <property type="entry name" value="ATPASE_A"/>
    <property type="match status" value="1"/>
</dbReference>
<sequence length="225" mass="24883">MNLFDQFLTPSLLGISLLMPALLMTTILLLNPKNQWLSHPTTTIKSWFINQAAKQIMTPINPTGHKHSLILISLLILLSLTNLLGLLPYTFTPTTQLSMNMAIALPLWLVTVLIGLRTQPTTSLAHLLPEGTPMLLIPILILIETISLLIRPIALGVRLTANLTAGHLLIQLISIATLNLWFMMPPLSLLTSTVLILLLLLEFAVAMIQAYVFVLLLSLYLQENS</sequence>
<comment type="function">
    <text evidence="1">Subunit a, of the mitochondrial membrane ATP synthase complex (F(1)F(0) ATP synthase or Complex V) that produces ATP from ADP in the presence of a proton gradient across the membrane which is generated by electron transport complexes of the respiratory chain. ATP synthase complex consist of a soluble F(1) head domain - the catalytic core - and a membrane F(1) domain - the membrane proton channel. These two domains are linked by a central stalk rotating inside the F(1) region and a stationary peripheral stalk. During catalysis, ATP synthesis in the catalytic domain of F(1) is coupled via a rotary mechanism of the central stalk subunits to proton translocation. With the subunit c (ATP5MC1), forms the proton-conducting channel in the F(0) domain, that contains two crucial half-channels (inlet and outlet) that facilitate proton movement from the mitochondrial intermembrane space (IMS) into the matrix. Protons are taken up via the inlet half-channel and released through the outlet half-channel, following a Grotthuss mechanism.</text>
</comment>
<comment type="catalytic activity">
    <reaction evidence="1">
        <text>H(+)(in) = H(+)(out)</text>
        <dbReference type="Rhea" id="RHEA:34979"/>
        <dbReference type="ChEBI" id="CHEBI:15378"/>
    </reaction>
</comment>
<comment type="subunit">
    <text evidence="1">Component of the ATP synthase complex composed at least of ATP5F1A/subunit alpha, ATP5F1B/subunit beta, ATP5MC1/subunit c (homooctomer), MT-ATP6/subunit a, MT-ATP8/subunit 8, ATP5ME/subunit e, ATP5MF/subunit f, ATP5MG/subunit g, ATP5MK/subunit k, ATP5MJ/subunit j, ATP5F1C/subunit gamma, ATP5F1D/subunit delta, ATP5F1E/subunit epsilon, ATP5PF/subunit F6, ATP5PB/subunit b, ATP5PD/subunit d, ATP5PO/subunit OSCP. ATP synthase complex consists of a soluble F(1) head domain (subunits alpha(3) and beta(3)) - the catalytic core - and a membrane F(0) domain - the membrane proton channel (subunits c, a, 8, e, f, g, k and j). These two domains are linked by a central stalk (subunits gamma, delta, and epsilon) rotating inside the F1 region and a stationary peripheral stalk (subunits F6, b, d, and OSCP). Interacts with DNAJC30; interaction is direct.</text>
</comment>
<comment type="subcellular location">
    <subcellularLocation>
        <location>Mitochondrion inner membrane</location>
        <topology>Multi-pass membrane protein</topology>
    </subcellularLocation>
</comment>
<comment type="similarity">
    <text evidence="3">Belongs to the ATPase A chain family.</text>
</comment>
<geneLocation type="mitochondrion"/>
<protein>
    <recommendedName>
        <fullName evidence="1">ATP synthase F(0) complex subunit a</fullName>
    </recommendedName>
    <alternativeName>
        <fullName>F-ATPase protein 6</fullName>
    </alternativeName>
    <alternativeName>
        <fullName evidence="1">Proton-conducting channel, ATP synthase F(0) complex subunit a</fullName>
    </alternativeName>
</protein>